<reference key="1">
    <citation type="journal article" date="2002" name="J. Bacteriol.">
        <title>Whole-genome comparison of Mycobacterium tuberculosis clinical and laboratory strains.</title>
        <authorList>
            <person name="Fleischmann R.D."/>
            <person name="Alland D."/>
            <person name="Eisen J.A."/>
            <person name="Carpenter L."/>
            <person name="White O."/>
            <person name="Peterson J.D."/>
            <person name="DeBoy R.T."/>
            <person name="Dodson R.J."/>
            <person name="Gwinn M.L."/>
            <person name="Haft D.H."/>
            <person name="Hickey E.K."/>
            <person name="Kolonay J.F."/>
            <person name="Nelson W.C."/>
            <person name="Umayam L.A."/>
            <person name="Ermolaeva M.D."/>
            <person name="Salzberg S.L."/>
            <person name="Delcher A."/>
            <person name="Utterback T.R."/>
            <person name="Weidman J.F."/>
            <person name="Khouri H.M."/>
            <person name="Gill J."/>
            <person name="Mikula A."/>
            <person name="Bishai W."/>
            <person name="Jacobs W.R. Jr."/>
            <person name="Venter J.C."/>
            <person name="Fraser C.M."/>
        </authorList>
    </citation>
    <scope>NUCLEOTIDE SEQUENCE [LARGE SCALE GENOMIC DNA]</scope>
    <source>
        <strain>CDC 1551 / Oshkosh</strain>
    </source>
</reference>
<proteinExistence type="inferred from homology"/>
<comment type="function">
    <text evidence="1">Part of the pafABC operon, but PafC does not seem to be involved in pupylation or substrate degradation.</text>
</comment>
<comment type="subunit">
    <text evidence="1">Interacts with PafB; with which it probably forms a heterocomplex.</text>
</comment>
<comment type="similarity">
    <text evidence="3">Belongs to the PafC family.</text>
</comment>
<name>PAFC_MYCTO</name>
<dbReference type="EMBL" id="AE000516">
    <property type="protein sequence ID" value="AAK46437.1"/>
    <property type="molecule type" value="Genomic_DNA"/>
</dbReference>
<dbReference type="PIR" id="B70768">
    <property type="entry name" value="B70768"/>
</dbReference>
<dbReference type="RefSeq" id="WP_003410772.1">
    <property type="nucleotide sequence ID" value="NZ_KK341227.1"/>
</dbReference>
<dbReference type="SMR" id="P9WIL8"/>
<dbReference type="KEGG" id="mtc:MT2156"/>
<dbReference type="PATRIC" id="fig|83331.31.peg.2325"/>
<dbReference type="HOGENOM" id="CLU_041141_2_0_11"/>
<dbReference type="Proteomes" id="UP000001020">
    <property type="component" value="Chromosome"/>
</dbReference>
<dbReference type="InterPro" id="IPR051534">
    <property type="entry name" value="CBASS_pafABC_assoc_protein"/>
</dbReference>
<dbReference type="InterPro" id="IPR028349">
    <property type="entry name" value="PafC"/>
</dbReference>
<dbReference type="InterPro" id="IPR043839">
    <property type="entry name" value="PafC_HTH"/>
</dbReference>
<dbReference type="InterPro" id="IPR026881">
    <property type="entry name" value="WYL_dom"/>
</dbReference>
<dbReference type="PANTHER" id="PTHR34580">
    <property type="match status" value="1"/>
</dbReference>
<dbReference type="PANTHER" id="PTHR34580:SF1">
    <property type="entry name" value="PROTEIN PAFC"/>
    <property type="match status" value="1"/>
</dbReference>
<dbReference type="Pfam" id="PF19187">
    <property type="entry name" value="HTH_PafC"/>
    <property type="match status" value="1"/>
</dbReference>
<dbReference type="Pfam" id="PF13280">
    <property type="entry name" value="WYL"/>
    <property type="match status" value="1"/>
</dbReference>
<dbReference type="PIRSF" id="PIRSF016838">
    <property type="entry name" value="PafC"/>
    <property type="match status" value="1"/>
</dbReference>
<dbReference type="PROSITE" id="PS52050">
    <property type="entry name" value="WYL"/>
    <property type="match status" value="1"/>
</dbReference>
<sequence length="316" mass="33764">MSALSTRLVRLLNMVPYFQANPRITRAEAAAELGVTAKQLEEDLNQLWMCGLPGYSPGDLIDFEFCGDTIEVTFSAGIDRPLKLTSPEATGLLVALRALADIPGVVDPQAARSAIAKIAAAAGAVAAVAEQAPTESPAAAAVRAAVRNSRALTIDYYAASHDTLTTRIVDPIRVLLIGGHSYLEAWSREAEGVRLFRFDRIVDAAELGEPAVPPESARQAPPDTSLFDGDLSLPSATLRVAPSASWMLEYYPIRELRQLPDGSCEVAMTYASEDWMTRLLLGFGSDVRVLAPESLAQRVRDAATAALDAYQAAAPP</sequence>
<gene>
    <name type="primary">pafC</name>
    <name type="ordered locus">MT2156</name>
</gene>
<feature type="chain" id="PRO_0000427983" description="Protein PafC">
    <location>
        <begin position="1"/>
        <end position="316"/>
    </location>
</feature>
<feature type="domain" description="WYL" evidence="2">
    <location>
        <begin position="131"/>
        <end position="211"/>
    </location>
</feature>
<accession>P9WIL8</accession>
<accession>A0A113</accession>
<accession>L0TBD1</accession>
<accession>Q10704</accession>
<protein>
    <recommendedName>
        <fullName>Protein PafC</fullName>
    </recommendedName>
    <alternativeName>
        <fullName>Proteasome accessory factor C</fullName>
    </alternativeName>
</protein>
<keyword id="KW-1185">Reference proteome</keyword>
<evidence type="ECO:0000250" key="1"/>
<evidence type="ECO:0000255" key="2">
    <source>
        <dbReference type="PROSITE-ProRule" id="PRU01395"/>
    </source>
</evidence>
<evidence type="ECO:0000305" key="3"/>
<organism>
    <name type="scientific">Mycobacterium tuberculosis (strain CDC 1551 / Oshkosh)</name>
    <dbReference type="NCBI Taxonomy" id="83331"/>
    <lineage>
        <taxon>Bacteria</taxon>
        <taxon>Bacillati</taxon>
        <taxon>Actinomycetota</taxon>
        <taxon>Actinomycetes</taxon>
        <taxon>Mycobacteriales</taxon>
        <taxon>Mycobacteriaceae</taxon>
        <taxon>Mycobacterium</taxon>
        <taxon>Mycobacterium tuberculosis complex</taxon>
    </lineage>
</organism>